<reference key="1">
    <citation type="journal article" date="2015" name="Genome Announc.">
        <title>Complete genome sequence of Anaeromyxobacter sp. Fw109-5, an anaerobic, metal-reducing bacterium isolated from a contaminated subsurface environment.</title>
        <authorList>
            <person name="Hwang C."/>
            <person name="Copeland A."/>
            <person name="Lucas S."/>
            <person name="Lapidus A."/>
            <person name="Barry K."/>
            <person name="Glavina Del Rio T."/>
            <person name="Dalin E."/>
            <person name="Tice H."/>
            <person name="Pitluck S."/>
            <person name="Sims D."/>
            <person name="Brettin T."/>
            <person name="Bruce D.C."/>
            <person name="Detter J.C."/>
            <person name="Han C.S."/>
            <person name="Schmutz J."/>
            <person name="Larimer F.W."/>
            <person name="Land M.L."/>
            <person name="Hauser L.J."/>
            <person name="Kyrpides N."/>
            <person name="Lykidis A."/>
            <person name="Richardson P."/>
            <person name="Belieav A."/>
            <person name="Sanford R.A."/>
            <person name="Loeffler F.E."/>
            <person name="Fields M.W."/>
        </authorList>
    </citation>
    <scope>NUCLEOTIDE SEQUENCE [LARGE SCALE GENOMIC DNA]</scope>
    <source>
        <strain>Fw109-5</strain>
    </source>
</reference>
<sequence>MKIPIYMDYHATTPVDRRVLEAMLPYFAEDFGNAASKSHAFGWRAEEAVEAAREEVARLVGASAKEIVWTSGATESDNLAVKGAAQFYQSKGKHLVTCKTEHKAVLDSMHALERQGFEVTFLDVEKDGRLDPARLRAALREDTILVSIMHANNETGVVHPIEEIGRITRAAGVLFHCDAVQSAGKLPFDVEDANVDLASLSAHKMYGPKGVGALYVRRKPRVRLIAQMDGGGHERGFRSGTLNVPGIVGFGKAAELARLEGAAEAERVLALRERLRKGLDAGLDLLTVNGSLAHRVPGNLNVSFAYVEGEALMMAIKDVAVSSGSACTSASLEPSYVLRAMGISEDLAHSSIRFGLGRFTTEEEVDHVVRLVVEKVRKLREMSPLYEMVKEGVDLSQIEWANPH</sequence>
<keyword id="KW-0001">2Fe-2S</keyword>
<keyword id="KW-0963">Cytoplasm</keyword>
<keyword id="KW-0408">Iron</keyword>
<keyword id="KW-0411">Iron-sulfur</keyword>
<keyword id="KW-0479">Metal-binding</keyword>
<keyword id="KW-0663">Pyridoxal phosphate</keyword>
<keyword id="KW-1185">Reference proteome</keyword>
<keyword id="KW-0808">Transferase</keyword>
<organism>
    <name type="scientific">Anaeromyxobacter sp. (strain Fw109-5)</name>
    <dbReference type="NCBI Taxonomy" id="404589"/>
    <lineage>
        <taxon>Bacteria</taxon>
        <taxon>Pseudomonadati</taxon>
        <taxon>Myxococcota</taxon>
        <taxon>Myxococcia</taxon>
        <taxon>Myxococcales</taxon>
        <taxon>Cystobacterineae</taxon>
        <taxon>Anaeromyxobacteraceae</taxon>
        <taxon>Anaeromyxobacter</taxon>
    </lineage>
</organism>
<dbReference type="EC" id="2.8.1.7" evidence="1"/>
<dbReference type="EMBL" id="CP000769">
    <property type="protein sequence ID" value="ABS24850.1"/>
    <property type="molecule type" value="Genomic_DNA"/>
</dbReference>
<dbReference type="RefSeq" id="WP_011984956.1">
    <property type="nucleotide sequence ID" value="NC_009675.1"/>
</dbReference>
<dbReference type="SMR" id="A7H804"/>
<dbReference type="STRING" id="404589.Anae109_0637"/>
<dbReference type="KEGG" id="afw:Anae109_0637"/>
<dbReference type="eggNOG" id="COG1104">
    <property type="taxonomic scope" value="Bacteria"/>
</dbReference>
<dbReference type="HOGENOM" id="CLU_003433_0_2_7"/>
<dbReference type="OrthoDB" id="9808002at2"/>
<dbReference type="UniPathway" id="UPA00266"/>
<dbReference type="Proteomes" id="UP000006382">
    <property type="component" value="Chromosome"/>
</dbReference>
<dbReference type="GO" id="GO:1990221">
    <property type="term" value="C:L-cysteine desulfurase complex"/>
    <property type="evidence" value="ECO:0007669"/>
    <property type="project" value="UniProtKB-ARBA"/>
</dbReference>
<dbReference type="GO" id="GO:0051537">
    <property type="term" value="F:2 iron, 2 sulfur cluster binding"/>
    <property type="evidence" value="ECO:0007669"/>
    <property type="project" value="UniProtKB-UniRule"/>
</dbReference>
<dbReference type="GO" id="GO:0031071">
    <property type="term" value="F:cysteine desulfurase activity"/>
    <property type="evidence" value="ECO:0007669"/>
    <property type="project" value="UniProtKB-UniRule"/>
</dbReference>
<dbReference type="GO" id="GO:0046872">
    <property type="term" value="F:metal ion binding"/>
    <property type="evidence" value="ECO:0007669"/>
    <property type="project" value="UniProtKB-KW"/>
</dbReference>
<dbReference type="GO" id="GO:0030170">
    <property type="term" value="F:pyridoxal phosphate binding"/>
    <property type="evidence" value="ECO:0007669"/>
    <property type="project" value="UniProtKB-UniRule"/>
</dbReference>
<dbReference type="GO" id="GO:0044571">
    <property type="term" value="P:[2Fe-2S] cluster assembly"/>
    <property type="evidence" value="ECO:0007669"/>
    <property type="project" value="UniProtKB-UniRule"/>
</dbReference>
<dbReference type="FunFam" id="3.40.640.10:FF:000003">
    <property type="entry name" value="Cysteine desulfurase IscS"/>
    <property type="match status" value="1"/>
</dbReference>
<dbReference type="FunFam" id="3.90.1150.10:FF:000002">
    <property type="entry name" value="Cysteine desulfurase IscS"/>
    <property type="match status" value="1"/>
</dbReference>
<dbReference type="Gene3D" id="3.90.1150.10">
    <property type="entry name" value="Aspartate Aminotransferase, domain 1"/>
    <property type="match status" value="1"/>
</dbReference>
<dbReference type="Gene3D" id="3.40.640.10">
    <property type="entry name" value="Type I PLP-dependent aspartate aminotransferase-like (Major domain)"/>
    <property type="match status" value="1"/>
</dbReference>
<dbReference type="HAMAP" id="MF_00331">
    <property type="entry name" value="Cys_desulf_IscS"/>
    <property type="match status" value="1"/>
</dbReference>
<dbReference type="InterPro" id="IPR000192">
    <property type="entry name" value="Aminotrans_V_dom"/>
</dbReference>
<dbReference type="InterPro" id="IPR020578">
    <property type="entry name" value="Aminotrans_V_PyrdxlP_BS"/>
</dbReference>
<dbReference type="InterPro" id="IPR010240">
    <property type="entry name" value="Cys_deSase_IscS"/>
</dbReference>
<dbReference type="InterPro" id="IPR016454">
    <property type="entry name" value="Cysteine_dSase"/>
</dbReference>
<dbReference type="InterPro" id="IPR015424">
    <property type="entry name" value="PyrdxlP-dep_Trfase"/>
</dbReference>
<dbReference type="InterPro" id="IPR015421">
    <property type="entry name" value="PyrdxlP-dep_Trfase_major"/>
</dbReference>
<dbReference type="InterPro" id="IPR015422">
    <property type="entry name" value="PyrdxlP-dep_Trfase_small"/>
</dbReference>
<dbReference type="NCBIfam" id="TIGR02006">
    <property type="entry name" value="IscS"/>
    <property type="match status" value="1"/>
</dbReference>
<dbReference type="NCBIfam" id="NF002806">
    <property type="entry name" value="PRK02948.1"/>
    <property type="match status" value="1"/>
</dbReference>
<dbReference type="NCBIfam" id="NF010611">
    <property type="entry name" value="PRK14012.1"/>
    <property type="match status" value="1"/>
</dbReference>
<dbReference type="PANTHER" id="PTHR11601:SF34">
    <property type="entry name" value="CYSTEINE DESULFURASE"/>
    <property type="match status" value="1"/>
</dbReference>
<dbReference type="PANTHER" id="PTHR11601">
    <property type="entry name" value="CYSTEINE DESULFURYLASE FAMILY MEMBER"/>
    <property type="match status" value="1"/>
</dbReference>
<dbReference type="Pfam" id="PF00266">
    <property type="entry name" value="Aminotran_5"/>
    <property type="match status" value="1"/>
</dbReference>
<dbReference type="PIRSF" id="PIRSF005572">
    <property type="entry name" value="NifS"/>
    <property type="match status" value="1"/>
</dbReference>
<dbReference type="SUPFAM" id="SSF53383">
    <property type="entry name" value="PLP-dependent transferases"/>
    <property type="match status" value="1"/>
</dbReference>
<dbReference type="PROSITE" id="PS00595">
    <property type="entry name" value="AA_TRANSFER_CLASS_5"/>
    <property type="match status" value="1"/>
</dbReference>
<gene>
    <name evidence="1" type="primary">iscS</name>
    <name type="ordered locus">Anae109_0637</name>
</gene>
<feature type="chain" id="PRO_1000019403" description="Cysteine desulfurase IscS">
    <location>
        <begin position="1"/>
        <end position="404"/>
    </location>
</feature>
<feature type="active site" description="Cysteine persulfide intermediate" evidence="1">
    <location>
        <position position="327"/>
    </location>
</feature>
<feature type="binding site" evidence="1">
    <location>
        <begin position="73"/>
        <end position="74"/>
    </location>
    <ligand>
        <name>pyridoxal 5'-phosphate</name>
        <dbReference type="ChEBI" id="CHEBI:597326"/>
    </ligand>
</feature>
<feature type="binding site" evidence="1">
    <location>
        <position position="153"/>
    </location>
    <ligand>
        <name>pyridoxal 5'-phosphate</name>
        <dbReference type="ChEBI" id="CHEBI:597326"/>
    </ligand>
</feature>
<feature type="binding site" evidence="1">
    <location>
        <position position="181"/>
    </location>
    <ligand>
        <name>pyridoxal 5'-phosphate</name>
        <dbReference type="ChEBI" id="CHEBI:597326"/>
    </ligand>
</feature>
<feature type="binding site" evidence="1">
    <location>
        <begin position="201"/>
        <end position="203"/>
    </location>
    <ligand>
        <name>pyridoxal 5'-phosphate</name>
        <dbReference type="ChEBI" id="CHEBI:597326"/>
    </ligand>
</feature>
<feature type="binding site" evidence="1">
    <location>
        <position position="241"/>
    </location>
    <ligand>
        <name>pyridoxal 5'-phosphate</name>
        <dbReference type="ChEBI" id="CHEBI:597326"/>
    </ligand>
</feature>
<feature type="binding site" description="via persulfide group" evidence="1">
    <location>
        <position position="327"/>
    </location>
    <ligand>
        <name>[2Fe-2S] cluster</name>
        <dbReference type="ChEBI" id="CHEBI:190135"/>
        <note>ligand shared with IscU</note>
    </ligand>
</feature>
<feature type="modified residue" description="N6-(pyridoxal phosphate)lysine" evidence="1">
    <location>
        <position position="204"/>
    </location>
</feature>
<name>ISCS_ANADF</name>
<proteinExistence type="inferred from homology"/>
<comment type="function">
    <text evidence="1">Master enzyme that delivers sulfur to a number of partners involved in Fe-S cluster assembly, tRNA modification or cofactor biosynthesis. Catalyzes the removal of elemental sulfur atoms from cysteine to produce alanine. Functions as a sulfur delivery protein for Fe-S cluster synthesis onto IscU, an Fe-S scaffold assembly protein, as well as other S acceptor proteins.</text>
</comment>
<comment type="catalytic activity">
    <reaction evidence="1">
        <text>(sulfur carrier)-H + L-cysteine = (sulfur carrier)-SH + L-alanine</text>
        <dbReference type="Rhea" id="RHEA:43892"/>
        <dbReference type="Rhea" id="RHEA-COMP:14737"/>
        <dbReference type="Rhea" id="RHEA-COMP:14739"/>
        <dbReference type="ChEBI" id="CHEBI:29917"/>
        <dbReference type="ChEBI" id="CHEBI:35235"/>
        <dbReference type="ChEBI" id="CHEBI:57972"/>
        <dbReference type="ChEBI" id="CHEBI:64428"/>
        <dbReference type="EC" id="2.8.1.7"/>
    </reaction>
</comment>
<comment type="cofactor">
    <cofactor evidence="1">
        <name>pyridoxal 5'-phosphate</name>
        <dbReference type="ChEBI" id="CHEBI:597326"/>
    </cofactor>
</comment>
<comment type="pathway">
    <text evidence="1">Cofactor biosynthesis; iron-sulfur cluster biosynthesis.</text>
</comment>
<comment type="subunit">
    <text evidence="1">Homodimer. Forms a heterotetramer with IscU, interacts with other sulfur acceptors.</text>
</comment>
<comment type="subcellular location">
    <subcellularLocation>
        <location evidence="1">Cytoplasm</location>
    </subcellularLocation>
</comment>
<comment type="similarity">
    <text evidence="1">Belongs to the class-V pyridoxal-phosphate-dependent aminotransferase family. NifS/IscS subfamily.</text>
</comment>
<evidence type="ECO:0000255" key="1">
    <source>
        <dbReference type="HAMAP-Rule" id="MF_00331"/>
    </source>
</evidence>
<protein>
    <recommendedName>
        <fullName evidence="1">Cysteine desulfurase IscS</fullName>
        <ecNumber evidence="1">2.8.1.7</ecNumber>
    </recommendedName>
</protein>
<accession>A7H804</accession>